<accession>Q971K9</accession>
<accession>F9VP27</accession>
<feature type="chain" id="PRO_0000030153" description="Arginine decarboxylase beta chain" evidence="1">
    <location>
        <begin position="1"/>
        <end position="75"/>
    </location>
</feature>
<feature type="chain" id="PRO_0000030154" description="Arginine decarboxylase alpha chain" evidence="1">
    <location>
        <begin position="76"/>
        <end position="128"/>
    </location>
</feature>
<feature type="active site" description="Schiff-base intermediate with substrate; via pyruvic acid" evidence="1">
    <location>
        <position position="76"/>
    </location>
</feature>
<feature type="active site" description="Proton acceptor; for processing activity" evidence="1">
    <location>
        <position position="81"/>
    </location>
</feature>
<feature type="active site" description="Proton donor; for catalytic activity" evidence="1">
    <location>
        <position position="96"/>
    </location>
</feature>
<feature type="site" description="Cleavage (non-hydrolytic); by autolysis" evidence="1">
    <location>
        <begin position="75"/>
        <end position="76"/>
    </location>
</feature>
<feature type="modified residue" description="Pyruvic acid (Ser); by autocatalysis" evidence="1">
    <location>
        <position position="76"/>
    </location>
</feature>
<reference key="1">
    <citation type="journal article" date="2001" name="DNA Res.">
        <title>Complete genome sequence of an aerobic thermoacidophilic Crenarchaeon, Sulfolobus tokodaii strain7.</title>
        <authorList>
            <person name="Kawarabayasi Y."/>
            <person name="Hino Y."/>
            <person name="Horikawa H."/>
            <person name="Jin-no K."/>
            <person name="Takahashi M."/>
            <person name="Sekine M."/>
            <person name="Baba S."/>
            <person name="Ankai A."/>
            <person name="Kosugi H."/>
            <person name="Hosoyama A."/>
            <person name="Fukui S."/>
            <person name="Nagai Y."/>
            <person name="Nishijima K."/>
            <person name="Otsuka R."/>
            <person name="Nakazawa H."/>
            <person name="Takamiya M."/>
            <person name="Kato Y."/>
            <person name="Yoshizawa T."/>
            <person name="Tanaka T."/>
            <person name="Kudoh Y."/>
            <person name="Yamazaki J."/>
            <person name="Kushida N."/>
            <person name="Oguchi A."/>
            <person name="Aoki K."/>
            <person name="Masuda S."/>
            <person name="Yanagii M."/>
            <person name="Nishimura M."/>
            <person name="Yamagishi A."/>
            <person name="Oshima T."/>
            <person name="Kikuchi H."/>
        </authorList>
    </citation>
    <scope>NUCLEOTIDE SEQUENCE [LARGE SCALE GENOMIC DNA]</scope>
    <source>
        <strain>DSM 16993 / JCM 10545 / NBRC 100140 / 7</strain>
    </source>
</reference>
<organism>
    <name type="scientific">Sulfurisphaera tokodaii (strain DSM 16993 / JCM 10545 / NBRC 100140 / 7)</name>
    <name type="common">Sulfolobus tokodaii</name>
    <dbReference type="NCBI Taxonomy" id="273063"/>
    <lineage>
        <taxon>Archaea</taxon>
        <taxon>Thermoproteota</taxon>
        <taxon>Thermoprotei</taxon>
        <taxon>Sulfolobales</taxon>
        <taxon>Sulfolobaceae</taxon>
        <taxon>Sulfurisphaera</taxon>
    </lineage>
</organism>
<proteinExistence type="inferred from homology"/>
<name>ARGDC_SULTO</name>
<gene>
    <name type="ordered locus">STK_13480</name>
</gene>
<keyword id="KW-0068">Autocatalytic cleavage</keyword>
<keyword id="KW-0210">Decarboxylase</keyword>
<keyword id="KW-0456">Lyase</keyword>
<keyword id="KW-0620">Polyamine biosynthesis</keyword>
<keyword id="KW-0670">Pyruvate</keyword>
<keyword id="KW-1185">Reference proteome</keyword>
<keyword id="KW-0704">Schiff base</keyword>
<keyword id="KW-0865">Zymogen</keyword>
<protein>
    <recommendedName>
        <fullName evidence="1">Arginine decarboxylase proenzyme</fullName>
        <shortName evidence="1">ADC</shortName>
        <shortName evidence="1">ArgDC</shortName>
        <ecNumber evidence="1">4.1.1.19</ecNumber>
    </recommendedName>
    <alternativeName>
        <fullName evidence="1">Pyruvoyl-dependent arginine decarboxylase</fullName>
    </alternativeName>
    <component>
        <recommendedName>
            <fullName evidence="1">Arginine decarboxylase beta chain</fullName>
        </recommendedName>
    </component>
    <component>
        <recommendedName>
            <fullName evidence="1">Arginine decarboxylase alpha chain</fullName>
        </recommendedName>
    </component>
</protein>
<sequence>MSSQLISLVNTDRIIGKHVFGNLYDIDPKILNDKDFLHNLVLEAVKIANMKLVEIKSWNFGGKKGGVSVIALVEESHIALHTWTEYNYATLDVYTCGENSNPQAAFEYIVSQLKPKRYQMFYADRSSE</sequence>
<evidence type="ECO:0000255" key="1">
    <source>
        <dbReference type="HAMAP-Rule" id="MF_01298"/>
    </source>
</evidence>
<dbReference type="EC" id="4.1.1.19" evidence="1"/>
<dbReference type="EMBL" id="BA000023">
    <property type="protein sequence ID" value="BAK54535.1"/>
    <property type="molecule type" value="Genomic_DNA"/>
</dbReference>
<dbReference type="SMR" id="Q971K9"/>
<dbReference type="STRING" id="273063.STK_13480"/>
<dbReference type="KEGG" id="sto:STK_13480"/>
<dbReference type="PATRIC" id="fig|273063.9.peg.1543"/>
<dbReference type="eggNOG" id="arCOG00279">
    <property type="taxonomic scope" value="Archaea"/>
</dbReference>
<dbReference type="OrthoDB" id="114016at2157"/>
<dbReference type="UniPathway" id="UPA00186">
    <property type="reaction ID" value="UER00284"/>
</dbReference>
<dbReference type="Proteomes" id="UP000001015">
    <property type="component" value="Chromosome"/>
</dbReference>
<dbReference type="GO" id="GO:0005829">
    <property type="term" value="C:cytosol"/>
    <property type="evidence" value="ECO:0007669"/>
    <property type="project" value="TreeGrafter"/>
</dbReference>
<dbReference type="GO" id="GO:0008792">
    <property type="term" value="F:arginine decarboxylase activity"/>
    <property type="evidence" value="ECO:0007669"/>
    <property type="project" value="UniProtKB-UniRule"/>
</dbReference>
<dbReference type="GO" id="GO:0006527">
    <property type="term" value="P:arginine catabolic process"/>
    <property type="evidence" value="ECO:0007669"/>
    <property type="project" value="UniProtKB-UniRule"/>
</dbReference>
<dbReference type="GO" id="GO:0006596">
    <property type="term" value="P:polyamine biosynthetic process"/>
    <property type="evidence" value="ECO:0007669"/>
    <property type="project" value="UniProtKB-UniRule"/>
</dbReference>
<dbReference type="FunFam" id="3.60.90.10:FF:000005">
    <property type="entry name" value="Arginine decarboxylase proenzyme"/>
    <property type="match status" value="1"/>
</dbReference>
<dbReference type="Gene3D" id="3.60.90.10">
    <property type="entry name" value="S-adenosylmethionine decarboxylase"/>
    <property type="match status" value="1"/>
</dbReference>
<dbReference type="HAMAP" id="MF_00464">
    <property type="entry name" value="AdoMetDC_1"/>
    <property type="match status" value="1"/>
</dbReference>
<dbReference type="HAMAP" id="MF_01298">
    <property type="entry name" value="ArgDC"/>
    <property type="match status" value="1"/>
</dbReference>
<dbReference type="InterPro" id="IPR003826">
    <property type="entry name" value="AdoMetDC_fam_prok"/>
</dbReference>
<dbReference type="InterPro" id="IPR027549">
    <property type="entry name" value="ArgDC"/>
</dbReference>
<dbReference type="InterPro" id="IPR016067">
    <property type="entry name" value="S-AdoMet_deCO2ase_core"/>
</dbReference>
<dbReference type="InterPro" id="IPR017716">
    <property type="entry name" value="S-AdoMet_deCOase_pro-enz"/>
</dbReference>
<dbReference type="NCBIfam" id="TIGR03330">
    <property type="entry name" value="SAM_DCase_Bsu"/>
    <property type="match status" value="1"/>
</dbReference>
<dbReference type="PANTHER" id="PTHR33866">
    <property type="entry name" value="S-ADENOSYLMETHIONINE DECARBOXYLASE PROENZYME"/>
    <property type="match status" value="1"/>
</dbReference>
<dbReference type="PANTHER" id="PTHR33866:SF2">
    <property type="entry name" value="S-ADENOSYLMETHIONINE DECARBOXYLASE PROENZYME"/>
    <property type="match status" value="1"/>
</dbReference>
<dbReference type="Pfam" id="PF02675">
    <property type="entry name" value="AdoMet_dc"/>
    <property type="match status" value="1"/>
</dbReference>
<dbReference type="SUPFAM" id="SSF56276">
    <property type="entry name" value="S-adenosylmethionine decarboxylase"/>
    <property type="match status" value="1"/>
</dbReference>
<comment type="function">
    <text evidence="1">Specifically catalyzes the decarboxylation of L-arginine to agmatine. Has no S-adenosylmethionine decarboxylase (AdoMetDC) activity.</text>
</comment>
<comment type="catalytic activity">
    <reaction evidence="1">
        <text>L-arginine + H(+) = agmatine + CO2</text>
        <dbReference type="Rhea" id="RHEA:17641"/>
        <dbReference type="ChEBI" id="CHEBI:15378"/>
        <dbReference type="ChEBI" id="CHEBI:16526"/>
        <dbReference type="ChEBI" id="CHEBI:32682"/>
        <dbReference type="ChEBI" id="CHEBI:58145"/>
        <dbReference type="EC" id="4.1.1.19"/>
    </reaction>
</comment>
<comment type="cofactor">
    <cofactor evidence="1">
        <name>pyruvate</name>
        <dbReference type="ChEBI" id="CHEBI:15361"/>
    </cofactor>
    <text evidence="1">Binds 1 pyruvoyl group covalently per subunit.</text>
</comment>
<comment type="pathway">
    <text evidence="1">Amine and polyamine biosynthesis; agmatine biosynthesis; agmatine from L-arginine: step 1/1.</text>
</comment>
<comment type="subunit">
    <text evidence="1">Heterooctamer of four alpha and four beta chains arranged as a tetramer of alpha/beta heterodimers.</text>
</comment>
<comment type="PTM">
    <text evidence="1">Is synthesized initially as an inactive proenzyme. Formation of the active enzyme involves a self-maturation process in which the active site pyruvoyl group is generated from an internal serine residue via an autocatalytic post-translational modification. Two non-identical subunits are generated from the proenzyme in this reaction, and the pyruvate is formed at the N-terminus of the alpha chain, which is derived from the carboxyl end of the proenzyme. The post-translation cleavage follows an unusual pathway, termed non-hydrolytic serinolysis, in which the side chain hydroxyl group of the serine supplies its oxygen atom to form the C-terminus of the beta chain, while the remainder of the serine residue undergoes an oxidative deamination to produce ammonia and the pyruvoyl group blocking the N-terminus of the alpha chain.</text>
</comment>
<comment type="similarity">
    <text evidence="1">Belongs to the prokaryotic AdoMetDC family. Type 1 subfamily.</text>
</comment>